<name>U17LC_MOUSE</name>
<proteinExistence type="evidence at protein level"/>
<gene>
    <name evidence="13" type="primary">Usp17lc</name>
    <name evidence="7" type="synonym">DUB-2</name>
    <name evidence="13" type="synonym">Dub2</name>
    <name evidence="13" type="synonym">Usp17l5</name>
</gene>
<accession>G5E8I7</accession>
<accession>O55190</accession>
<accession>O55191</accession>
<protein>
    <recommendedName>
        <fullName evidence="13">Ubiquitin carboxyl-terminal hydrolase 17-like protein C</fullName>
        <ecNumber evidence="4 6">3.4.19.12</ecNumber>
    </recommendedName>
    <alternativeName>
        <fullName evidence="10">Deubiquitinating enzyme 2</fullName>
    </alternativeName>
</protein>
<keyword id="KW-0256">Endoplasmic reticulum</keyword>
<keyword id="KW-0378">Hydrolase</keyword>
<keyword id="KW-0539">Nucleus</keyword>
<keyword id="KW-0645">Protease</keyword>
<keyword id="KW-1185">Reference proteome</keyword>
<keyword id="KW-0788">Thiol protease</keyword>
<keyword id="KW-0833">Ubl conjugation pathway</keyword>
<reference evidence="11" key="1">
    <citation type="journal article" date="1997" name="J. Biol. Chem.">
        <title>DUB-2 is a member of a novel family of cytokine-inducible deubiquitinating enzymes.</title>
        <authorList>
            <person name="Zhu Y."/>
            <person name="Lambert K."/>
            <person name="Corless C."/>
            <person name="Copeland N.G."/>
            <person name="Gilbert D.J."/>
            <person name="Jenkins N.A."/>
            <person name="D'Andrea A.D."/>
        </authorList>
    </citation>
    <scope>NUCLEOTIDE SEQUENCE [GENOMIC DNA / MRNA]</scope>
    <scope>FUNCTION</scope>
    <scope>CATALYTIC ACTIVITY</scope>
    <scope>TISSUE SPECIFICITY</scope>
    <scope>INDUCTION</scope>
    <scope>ACTIVE SITE</scope>
    <scope>MUTAGENESIS OF CYS-60</scope>
    <source>
        <strain evidence="11">129/Sv</strain>
    </source>
</reference>
<reference evidence="14" key="2">
    <citation type="journal article" date="2009" name="PLoS Biol.">
        <title>Lineage-specific biology revealed by a finished genome assembly of the mouse.</title>
        <authorList>
            <person name="Church D.M."/>
            <person name="Goodstadt L."/>
            <person name="Hillier L.W."/>
            <person name="Zody M.C."/>
            <person name="Goldstein S."/>
            <person name="She X."/>
            <person name="Bult C.J."/>
            <person name="Agarwala R."/>
            <person name="Cherry J.L."/>
            <person name="DiCuccio M."/>
            <person name="Hlavina W."/>
            <person name="Kapustin Y."/>
            <person name="Meric P."/>
            <person name="Maglott D."/>
            <person name="Birtle Z."/>
            <person name="Marques A.C."/>
            <person name="Graves T."/>
            <person name="Zhou S."/>
            <person name="Teague B."/>
            <person name="Potamousis K."/>
            <person name="Churas C."/>
            <person name="Place M."/>
            <person name="Herschleb J."/>
            <person name="Runnheim R."/>
            <person name="Forrest D."/>
            <person name="Amos-Landgraf J."/>
            <person name="Schwartz D.C."/>
            <person name="Cheng Z."/>
            <person name="Lindblad-Toh K."/>
            <person name="Eichler E.E."/>
            <person name="Ponting C.P."/>
        </authorList>
    </citation>
    <scope>NUCLEOTIDE SEQUENCE [LARGE SCALE GENOMIC DNA]</scope>
    <source>
        <strain evidence="14">C57BL/6J</strain>
    </source>
</reference>
<reference evidence="12" key="3">
    <citation type="submission" date="2005-07" db="EMBL/GenBank/DDBJ databases">
        <authorList>
            <person name="Mural R.J."/>
            <person name="Adams M.D."/>
            <person name="Myers E.W."/>
            <person name="Smith H.O."/>
            <person name="Venter J.C."/>
        </authorList>
    </citation>
    <scope>NUCLEOTIDE SEQUENCE [LARGE SCALE GENOMIC DNA]</scope>
</reference>
<reference evidence="8" key="4">
    <citation type="journal article" date="2001" name="Am. J. Hematol.">
        <title>Critical regions for deubiquitinating activity of DUB-2 expressed in T-lymphocytes.</title>
        <authorList>
            <person name="Lee J.H."/>
            <person name="Kim Y.S."/>
            <person name="Kim M."/>
            <person name="Baek K.H."/>
        </authorList>
    </citation>
    <scope>FUNCTION</scope>
    <scope>CATALYTIC ACTIVITY</scope>
    <scope>ACTIVE SITE</scope>
    <scope>MUTAGENESIS OF CYS-60; ASP-133; HIS-298 AND HIS-307</scope>
</reference>
<reference evidence="8" key="5">
    <citation type="journal article" date="2012" name="PLoS ONE">
        <title>Embryonic demise caused by targeted disruption of a cysteine protease Dub-2.</title>
        <authorList>
            <person name="Baek K.H."/>
            <person name="Lee H."/>
            <person name="Yang S."/>
            <person name="Lim S.B."/>
            <person name="Lee W."/>
            <person name="Lee J.E."/>
            <person name="Lim J.J."/>
            <person name="Jun K."/>
            <person name="Lee D.R."/>
            <person name="Chung Y."/>
        </authorList>
    </citation>
    <scope>FUNCTION</scope>
    <scope>DISRUPTION PHENOTYPE</scope>
</reference>
<comment type="function">
    <text evidence="4 5 6">Deubiquitinating enzyme that removes conjugated ubiquitin from specific proteins to regulate different cellular processes (PubMed:11443643, PubMed:8995226). Important for preimplantation stage embryonic development (PubMed:22984479).</text>
</comment>
<comment type="catalytic activity">
    <reaction evidence="4 6">
        <text>Thiol-dependent hydrolysis of ester, thioester, amide, peptide and isopeptide bonds formed by the C-terminal Gly of ubiquitin (a 76-residue protein attached to proteins as an intracellular targeting signal).</text>
        <dbReference type="EC" id="3.4.19.12"/>
    </reaction>
</comment>
<comment type="subcellular location">
    <subcellularLocation>
        <location evidence="1">Nucleus</location>
    </subcellularLocation>
    <subcellularLocation>
        <location evidence="1">Endoplasmic reticulum</location>
    </subcellularLocation>
</comment>
<comment type="tissue specificity">
    <text evidence="6">Expressed in T cells.</text>
</comment>
<comment type="induction">
    <text evidence="6">Rapidly up-regulated in response to the cytokine IL2.</text>
</comment>
<comment type="disruption phenotype">
    <text evidence="5">Embryonic lethal, with no survival beyond embryonic stage E5.5. Blastocysts fail to hatch and there is significant apoptosis of the trophectoderm. Cell proliferation may also be impaired. Blastocysts at stage E3.5 appear to have normal morphology.</text>
</comment>
<comment type="similarity">
    <text evidence="8">Belongs to the peptidase C19 family. USP17 subfamily.</text>
</comment>
<sequence>MVVSLSFPEADPALSSPGAQQLHQDEAQVVVELTANDKPSLSWECPQGPGCGLQNTGNSCYLNAALQCLTHTPPLADYMLSQEYSQTCCSPEGCKMCAMEAHVTQSLLHSHSGDVMKPSQILTSAFHKHQQEDAHEFLMFTLETMHESCLQVHRQSEPTSEDSSPIHDIFGGLWRSQIKCLHCQGTSDTYDRFLDVPLDISSAQSVNQALWDTEKSEELRGENAYYCGRCRQKMPASKTLHIHSAPKVLLLVLKRFSAFMGNKLDRKVSYPEFLDLKPYLSQPTGGPLPYALYAVLVHEGATCHSGHYFSYVKARHGAWYKMDDTKVTSCDVTSVLNENAYVLFYVQQTDLKQVSIDMPEGRVHEVLDPEYQLKKSRRKKHKKKSPCTEDAGEPCKNREKRATKETSLGEGKVLQEKNHKKAGQKHENTKLVPQEQNHQKLGQKHRINEILPQEQNHQKAGQSLRNTEGELDLPADAIVIHLLRSTENWGRDAPDKENQPWHNADRLLTSQDPVNTGQLCRQEGRRRSKKGKNKNKQGQRLLLVC</sequence>
<organism evidence="14">
    <name type="scientific">Mus musculus</name>
    <name type="common">Mouse</name>
    <dbReference type="NCBI Taxonomy" id="10090"/>
    <lineage>
        <taxon>Eukaryota</taxon>
        <taxon>Metazoa</taxon>
        <taxon>Chordata</taxon>
        <taxon>Craniata</taxon>
        <taxon>Vertebrata</taxon>
        <taxon>Euteleostomi</taxon>
        <taxon>Mammalia</taxon>
        <taxon>Eutheria</taxon>
        <taxon>Euarchontoglires</taxon>
        <taxon>Glires</taxon>
        <taxon>Rodentia</taxon>
        <taxon>Myomorpha</taxon>
        <taxon>Muroidea</taxon>
        <taxon>Muridae</taxon>
        <taxon>Murinae</taxon>
        <taxon>Mus</taxon>
        <taxon>Mus</taxon>
    </lineage>
</organism>
<dbReference type="EC" id="3.4.19.12" evidence="4 6"/>
<dbReference type="EMBL" id="U70368">
    <property type="protein sequence ID" value="AAB95194.1"/>
    <property type="molecule type" value="Genomic_DNA"/>
</dbReference>
<dbReference type="EMBL" id="U70369">
    <property type="protein sequence ID" value="AAB94636.1"/>
    <property type="molecule type" value="mRNA"/>
</dbReference>
<dbReference type="EMBL" id="AC162877">
    <property type="status" value="NOT_ANNOTATED_CDS"/>
    <property type="molecule type" value="Genomic_DNA"/>
</dbReference>
<dbReference type="EMBL" id="CH466531">
    <property type="protein sequence ID" value="EDL16660.1"/>
    <property type="molecule type" value="Genomic_DNA"/>
</dbReference>
<dbReference type="CCDS" id="CCDS21572.1"/>
<dbReference type="RefSeq" id="NP_034219.3">
    <property type="nucleotide sequence ID" value="NM_010089.3"/>
</dbReference>
<dbReference type="SMR" id="G5E8I7"/>
<dbReference type="FunCoup" id="G5E8I7">
    <property type="interactions" value="255"/>
</dbReference>
<dbReference type="STRING" id="10090.ENSMUSP00000078323"/>
<dbReference type="MEROPS" id="C19.032"/>
<dbReference type="iPTMnet" id="G5E8I7"/>
<dbReference type="PhosphoSitePlus" id="G5E8I7"/>
<dbReference type="jPOST" id="G5E8I7"/>
<dbReference type="PaxDb" id="10090-ENSMUSP00000102505"/>
<dbReference type="DNASU" id="13532"/>
<dbReference type="Ensembl" id="ENSMUST00000079348.4">
    <property type="protein sequence ID" value="ENSMUSP00000078323.4"/>
    <property type="gene ID" value="ENSMUSG00000058976.5"/>
</dbReference>
<dbReference type="Ensembl" id="ENSMUST00000106892.2">
    <property type="protein sequence ID" value="ENSMUSP00000102505.2"/>
    <property type="gene ID" value="ENSMUSG00000058976.5"/>
</dbReference>
<dbReference type="GeneID" id="13532"/>
<dbReference type="KEGG" id="mmu:13532"/>
<dbReference type="UCSC" id="uc009itr.1">
    <property type="organism name" value="mouse"/>
</dbReference>
<dbReference type="AGR" id="MGI:107698"/>
<dbReference type="CTD" id="13532"/>
<dbReference type="MGI" id="MGI:107698">
    <property type="gene designation" value="Usp17lc"/>
</dbReference>
<dbReference type="VEuPathDB" id="HostDB:ENSMUSG00000058976"/>
<dbReference type="eggNOG" id="KOG1865">
    <property type="taxonomic scope" value="Eukaryota"/>
</dbReference>
<dbReference type="GeneTree" id="ENSGT00940000162665"/>
<dbReference type="HOGENOM" id="CLU_008279_10_0_1"/>
<dbReference type="InParanoid" id="G5E8I7"/>
<dbReference type="OMA" id="ENAYHCN"/>
<dbReference type="OrthoDB" id="420187at2759"/>
<dbReference type="PhylomeDB" id="G5E8I7"/>
<dbReference type="TreeFam" id="TF315281"/>
<dbReference type="Reactome" id="R-MMU-5689880">
    <property type="pathway name" value="Ub-specific processing proteases"/>
</dbReference>
<dbReference type="Reactome" id="R-MMU-9648002">
    <property type="pathway name" value="RAS processing"/>
</dbReference>
<dbReference type="BioGRID-ORCS" id="13532">
    <property type="hits" value="2 hits in 56 CRISPR screens"/>
</dbReference>
<dbReference type="PRO" id="PR:G5E8I7"/>
<dbReference type="Proteomes" id="UP000000589">
    <property type="component" value="Chromosome 7"/>
</dbReference>
<dbReference type="RNAct" id="G5E8I7">
    <property type="molecule type" value="protein"/>
</dbReference>
<dbReference type="Bgee" id="ENSMUSG00000058976">
    <property type="expression patterns" value="Expressed in animal zygote and 2 other cell types or tissues"/>
</dbReference>
<dbReference type="GO" id="GO:0005783">
    <property type="term" value="C:endoplasmic reticulum"/>
    <property type="evidence" value="ECO:0007669"/>
    <property type="project" value="UniProtKB-SubCell"/>
</dbReference>
<dbReference type="GO" id="GO:0005634">
    <property type="term" value="C:nucleus"/>
    <property type="evidence" value="ECO:0007669"/>
    <property type="project" value="UniProtKB-SubCell"/>
</dbReference>
<dbReference type="GO" id="GO:0004843">
    <property type="term" value="F:cysteine-type deubiquitinase activity"/>
    <property type="evidence" value="ECO:0000314"/>
    <property type="project" value="MGI"/>
</dbReference>
<dbReference type="GO" id="GO:0043009">
    <property type="term" value="P:chordate embryonic development"/>
    <property type="evidence" value="ECO:0000315"/>
    <property type="project" value="CACAO"/>
</dbReference>
<dbReference type="GO" id="GO:0016579">
    <property type="term" value="P:protein deubiquitination"/>
    <property type="evidence" value="ECO:0000314"/>
    <property type="project" value="MGI"/>
</dbReference>
<dbReference type="GO" id="GO:0006508">
    <property type="term" value="P:proteolysis"/>
    <property type="evidence" value="ECO:0007669"/>
    <property type="project" value="UniProtKB-KW"/>
</dbReference>
<dbReference type="CDD" id="cd02661">
    <property type="entry name" value="Peptidase_C19E"/>
    <property type="match status" value="1"/>
</dbReference>
<dbReference type="FunFam" id="3.90.70.10:FF:000197">
    <property type="entry name" value="Ubiquitin carboxyl-terminal hydrolase 17-like protein E"/>
    <property type="match status" value="1"/>
</dbReference>
<dbReference type="Gene3D" id="3.90.70.10">
    <property type="entry name" value="Cysteine proteinases"/>
    <property type="match status" value="1"/>
</dbReference>
<dbReference type="InterPro" id="IPR038765">
    <property type="entry name" value="Papain-like_cys_pep_sf"/>
</dbReference>
<dbReference type="InterPro" id="IPR050164">
    <property type="entry name" value="Peptidase_C19"/>
</dbReference>
<dbReference type="InterPro" id="IPR001394">
    <property type="entry name" value="Peptidase_C19_UCH"/>
</dbReference>
<dbReference type="InterPro" id="IPR018200">
    <property type="entry name" value="USP_CS"/>
</dbReference>
<dbReference type="InterPro" id="IPR028889">
    <property type="entry name" value="USP_dom"/>
</dbReference>
<dbReference type="PANTHER" id="PTHR24006:SF651">
    <property type="entry name" value="INACTIVE UBIQUITIN CARBOXYL-TERMINAL HYDROLASE 17-LIKE PROTEIN 4-RELATED"/>
    <property type="match status" value="1"/>
</dbReference>
<dbReference type="PANTHER" id="PTHR24006">
    <property type="entry name" value="UBIQUITIN CARBOXYL-TERMINAL HYDROLASE"/>
    <property type="match status" value="1"/>
</dbReference>
<dbReference type="Pfam" id="PF00443">
    <property type="entry name" value="UCH"/>
    <property type="match status" value="1"/>
</dbReference>
<dbReference type="SUPFAM" id="SSF54001">
    <property type="entry name" value="Cysteine proteinases"/>
    <property type="match status" value="1"/>
</dbReference>
<dbReference type="PROSITE" id="PS00972">
    <property type="entry name" value="USP_1"/>
    <property type="match status" value="1"/>
</dbReference>
<dbReference type="PROSITE" id="PS00973">
    <property type="entry name" value="USP_2"/>
    <property type="match status" value="1"/>
</dbReference>
<dbReference type="PROSITE" id="PS50235">
    <property type="entry name" value="USP_3"/>
    <property type="match status" value="1"/>
</dbReference>
<feature type="chain" id="PRO_0000442982" description="Ubiquitin carboxyl-terminal hydrolase 17-like protein C">
    <location>
        <begin position="1"/>
        <end position="545"/>
    </location>
</feature>
<feature type="domain" description="USP" evidence="2">
    <location>
        <begin position="51"/>
        <end position="348"/>
    </location>
</feature>
<feature type="region of interest" description="Disordered" evidence="3">
    <location>
        <begin position="368"/>
        <end position="442"/>
    </location>
</feature>
<feature type="region of interest" description="Disordered" evidence="3">
    <location>
        <begin position="489"/>
        <end position="539"/>
    </location>
</feature>
<feature type="compositionally biased region" description="Basic residues" evidence="3">
    <location>
        <begin position="374"/>
        <end position="385"/>
    </location>
</feature>
<feature type="compositionally biased region" description="Basic and acidic residues" evidence="3">
    <location>
        <begin position="393"/>
        <end position="404"/>
    </location>
</feature>
<feature type="compositionally biased region" description="Basic and acidic residues" evidence="3">
    <location>
        <begin position="489"/>
        <end position="505"/>
    </location>
</feature>
<feature type="compositionally biased region" description="Polar residues" evidence="3">
    <location>
        <begin position="508"/>
        <end position="519"/>
    </location>
</feature>
<feature type="compositionally biased region" description="Basic residues" evidence="3">
    <location>
        <begin position="524"/>
        <end position="537"/>
    </location>
</feature>
<feature type="active site" description="Nucleophile" evidence="2 9 10">
    <location>
        <position position="60"/>
    </location>
</feature>
<feature type="active site" description="Proton acceptor" evidence="2 9">
    <location>
        <position position="307"/>
    </location>
</feature>
<feature type="mutagenesis site" description="Abolishes deubiquitinating activity." evidence="6">
    <original>C</original>
    <variation>S</variation>
    <location>
        <position position="60"/>
    </location>
</feature>
<feature type="mutagenesis site" description="Abolishes deubiquitinating activity." evidence="6">
    <original>D</original>
    <variation>N</variation>
    <location>
        <position position="133"/>
    </location>
</feature>
<feature type="mutagenesis site" description="Abolishes deubiquitinating activity." evidence="6">
    <original>H</original>
    <variation>Q</variation>
    <location>
        <position position="298"/>
    </location>
</feature>
<feature type="mutagenesis site" description="Abolishes deubiquitinating activity." evidence="6">
    <original>H</original>
    <variation>Q</variation>
    <location>
        <position position="307"/>
    </location>
</feature>
<feature type="sequence conflict" description="In Ref. 1; AAB94636." evidence="8" ref="1">
    <original>A</original>
    <variation>Q</variation>
    <location>
        <position position="10"/>
    </location>
</feature>
<evidence type="ECO:0000250" key="1">
    <source>
        <dbReference type="UniProtKB" id="Q6R6M4"/>
    </source>
</evidence>
<evidence type="ECO:0000255" key="2">
    <source>
        <dbReference type="PROSITE-ProRule" id="PRU01035"/>
    </source>
</evidence>
<evidence type="ECO:0000256" key="3">
    <source>
        <dbReference type="SAM" id="MobiDB-lite"/>
    </source>
</evidence>
<evidence type="ECO:0000269" key="4">
    <source>
    </source>
</evidence>
<evidence type="ECO:0000269" key="5">
    <source>
    </source>
</evidence>
<evidence type="ECO:0000269" key="6">
    <source>
    </source>
</evidence>
<evidence type="ECO:0000303" key="7">
    <source>
    </source>
</evidence>
<evidence type="ECO:0000305" key="8"/>
<evidence type="ECO:0000305" key="9">
    <source>
    </source>
</evidence>
<evidence type="ECO:0000305" key="10">
    <source>
    </source>
</evidence>
<evidence type="ECO:0000312" key="11">
    <source>
        <dbReference type="EMBL" id="AAB95194.1"/>
    </source>
</evidence>
<evidence type="ECO:0000312" key="12">
    <source>
        <dbReference type="EMBL" id="EDL16660.1"/>
    </source>
</evidence>
<evidence type="ECO:0000312" key="13">
    <source>
        <dbReference type="MGI" id="MGI:107698"/>
    </source>
</evidence>
<evidence type="ECO:0000312" key="14">
    <source>
        <dbReference type="Proteomes" id="UP000000589"/>
    </source>
</evidence>